<organism>
    <name type="scientific">Lucihormetica grossei</name>
    <name type="common">Cockroach</name>
    <dbReference type="NCBI Taxonomy" id="521513"/>
    <lineage>
        <taxon>Eukaryota</taxon>
        <taxon>Metazoa</taxon>
        <taxon>Ecdysozoa</taxon>
        <taxon>Arthropoda</taxon>
        <taxon>Hexapoda</taxon>
        <taxon>Insecta</taxon>
        <taxon>Pterygota</taxon>
        <taxon>Neoptera</taxon>
        <taxon>Polyneoptera</taxon>
        <taxon>Dictyoptera</taxon>
        <taxon>Blattodea</taxon>
        <taxon>Blaberoidea</taxon>
        <taxon>Blaberidae</taxon>
        <taxon>Blaberinae</taxon>
        <taxon>Lucihormetica</taxon>
    </lineage>
</organism>
<feature type="peptide" id="PRO_0000378702" description="Pyrokinin-5" evidence="3">
    <location>
        <begin position="1"/>
        <end position="17"/>
    </location>
</feature>
<feature type="modified residue" description="Leucine amide" evidence="3">
    <location>
        <position position="17"/>
    </location>
</feature>
<protein>
    <recommendedName>
        <fullName evidence="1">Pyrokinin-5</fullName>
    </recommendedName>
    <alternativeName>
        <fullName evidence="1">FXPRL-amide</fullName>
    </alternativeName>
    <alternativeName>
        <fullName evidence="4">LucGr-Capa-PK</fullName>
    </alternativeName>
</protein>
<name>PPK5_LUCGR</name>
<evidence type="ECO:0000250" key="1">
    <source>
        <dbReference type="UniProtKB" id="P82617"/>
    </source>
</evidence>
<evidence type="ECO:0000255" key="2"/>
<evidence type="ECO:0000269" key="3">
    <source>
    </source>
</evidence>
<evidence type="ECO:0000303" key="4">
    <source>
    </source>
</evidence>
<evidence type="ECO:0000305" key="5"/>
<keyword id="KW-0027">Amidation</keyword>
<keyword id="KW-0903">Direct protein sequencing</keyword>
<keyword id="KW-0527">Neuropeptide</keyword>
<keyword id="KW-0964">Secreted</keyword>
<dbReference type="GO" id="GO:0005576">
    <property type="term" value="C:extracellular region"/>
    <property type="evidence" value="ECO:0007669"/>
    <property type="project" value="UniProtKB-SubCell"/>
</dbReference>
<dbReference type="GO" id="GO:0005184">
    <property type="term" value="F:neuropeptide hormone activity"/>
    <property type="evidence" value="ECO:0007669"/>
    <property type="project" value="InterPro"/>
</dbReference>
<dbReference type="GO" id="GO:0007218">
    <property type="term" value="P:neuropeptide signaling pathway"/>
    <property type="evidence" value="ECO:0007669"/>
    <property type="project" value="UniProtKB-KW"/>
</dbReference>
<dbReference type="InterPro" id="IPR001484">
    <property type="entry name" value="Pyrokinin_CS"/>
</dbReference>
<dbReference type="PROSITE" id="PS00539">
    <property type="entry name" value="PYROKININ"/>
    <property type="match status" value="1"/>
</dbReference>
<sequence>GGESSNEAKGMWFGPRL</sequence>
<comment type="function">
    <text evidence="1">Myoactive.</text>
</comment>
<comment type="subcellular location">
    <subcellularLocation>
        <location evidence="5">Secreted</location>
    </subcellularLocation>
</comment>
<comment type="similarity">
    <text evidence="2">Belongs to the pyrokinin family.</text>
</comment>
<reference evidence="5" key="1">
    <citation type="journal article" date="2009" name="BMC Evol. Biol.">
        <title>A proteomic approach for studying insect phylogeny: CAPA peptides of ancient insect taxa (Dictyoptera, Blattoptera) as a test case.</title>
        <authorList>
            <person name="Roth S."/>
            <person name="Fromm B."/>
            <person name="Gaede G."/>
            <person name="Predel R."/>
        </authorList>
    </citation>
    <scope>PROTEIN SEQUENCE</scope>
    <scope>AMIDATION AT LEU-17</scope>
    <source>
        <tissue evidence="3">Abdominal perisympathetic organs</tissue>
    </source>
</reference>
<proteinExistence type="evidence at protein level"/>
<accession>P85663</accession>